<sequence>MADQLTEEQIAEFKEAFSLFDKDGDGTITTKELGTVMRSLGQNPTEAELQDMINEVDADGNGTIDFPEFLTMMARKMKDTDSEEEIREAFRVFDKDGNGYISAAELRHVMTNLGEKLTDEEVDEMIREADIDGDGQVNYEEFVQMMTAK</sequence>
<name>CALM2_RAT</name>
<dbReference type="EMBL" id="M19312">
    <property type="protein sequence ID" value="AAA40862.1"/>
    <property type="molecule type" value="mRNA"/>
</dbReference>
<dbReference type="EMBL" id="M17069">
    <property type="protein sequence ID" value="AAA40863.1"/>
    <property type="molecule type" value="mRNA"/>
</dbReference>
<dbReference type="EMBL" id="X13833">
    <property type="protein sequence ID" value="CAA32062.1"/>
    <property type="molecule type" value="Genomic_DNA"/>
</dbReference>
<dbReference type="EMBL" id="X13834">
    <property type="protein sequence ID" value="CAA32062.1"/>
    <property type="status" value="JOINED"/>
    <property type="molecule type" value="Genomic_DNA"/>
</dbReference>
<dbReference type="EMBL" id="X13835">
    <property type="protein sequence ID" value="CAA32062.1"/>
    <property type="status" value="JOINED"/>
    <property type="molecule type" value="Genomic_DNA"/>
</dbReference>
<dbReference type="EMBL" id="BC058485">
    <property type="protein sequence ID" value="AAH58485.1"/>
    <property type="molecule type" value="mRNA"/>
</dbReference>
<dbReference type="RefSeq" id="NP_059022.1">
    <property type="nucleotide sequence ID" value="NM_017326.3"/>
</dbReference>
<dbReference type="PDB" id="6ALE">
    <property type="method" value="X-ray"/>
    <property type="resolution" value="2.50 A"/>
    <property type="chains" value="R=5-148"/>
</dbReference>
<dbReference type="PDBsum" id="6ALE"/>
<dbReference type="SMR" id="P0DP30"/>
<dbReference type="FunCoup" id="P0DP30">
    <property type="interactions" value="4907"/>
</dbReference>
<dbReference type="iPTMnet" id="P0DP30"/>
<dbReference type="jPOST" id="P0DP30"/>
<dbReference type="Ensembl" id="ENSRNOT00000064679.3">
    <property type="protein sequence ID" value="ENSRNOP00000063822.1"/>
    <property type="gene ID" value="ENSRNOG00000004060.8"/>
</dbReference>
<dbReference type="GeneID" id="50663"/>
<dbReference type="KEGG" id="rno:24242"/>
<dbReference type="KEGG" id="rno:24244"/>
<dbReference type="KEGG" id="rno:50663"/>
<dbReference type="AGR" id="RGD:2257"/>
<dbReference type="AGR" id="RGD:2258"/>
<dbReference type="AGR" id="RGD:2259"/>
<dbReference type="CTD" id="801"/>
<dbReference type="CTD" id="805"/>
<dbReference type="CTD" id="808"/>
<dbReference type="RGD" id="2258">
    <property type="gene designation" value="Calm2"/>
</dbReference>
<dbReference type="VEuPathDB" id="HostDB:ENSRNOG00000016770"/>
<dbReference type="InParanoid" id="P0DP30"/>
<dbReference type="OrthoDB" id="17077at9989"/>
<dbReference type="PRO" id="PR:P0DP30"/>
<dbReference type="Proteomes" id="UP000002494">
    <property type="component" value="Chromosome 6"/>
</dbReference>
<dbReference type="Bgee" id="ENSRNOG00000004060">
    <property type="expression patterns" value="Expressed in Ammon's horn and 19 other cell types or tissues"/>
</dbReference>
<dbReference type="ExpressionAtlas" id="P0DP30">
    <property type="expression patterns" value="baseline and differential"/>
</dbReference>
<dbReference type="GO" id="GO:0034704">
    <property type="term" value="C:calcium channel complex"/>
    <property type="evidence" value="ECO:0000266"/>
    <property type="project" value="RGD"/>
</dbReference>
<dbReference type="GO" id="GO:0044305">
    <property type="term" value="C:calyx of Held"/>
    <property type="evidence" value="ECO:0000266"/>
    <property type="project" value="RGD"/>
</dbReference>
<dbReference type="GO" id="GO:1902494">
    <property type="term" value="C:catalytic complex"/>
    <property type="evidence" value="ECO:0000266"/>
    <property type="project" value="RGD"/>
</dbReference>
<dbReference type="GO" id="GO:0005813">
    <property type="term" value="C:centrosome"/>
    <property type="evidence" value="ECO:0000266"/>
    <property type="project" value="RGD"/>
</dbReference>
<dbReference type="GO" id="GO:0005737">
    <property type="term" value="C:cytoplasm"/>
    <property type="evidence" value="ECO:0000266"/>
    <property type="project" value="RGD"/>
</dbReference>
<dbReference type="GO" id="GO:0030426">
    <property type="term" value="C:growth cone"/>
    <property type="evidence" value="ECO:0000314"/>
    <property type="project" value="RGD"/>
</dbReference>
<dbReference type="GO" id="GO:0016020">
    <property type="term" value="C:membrane"/>
    <property type="evidence" value="ECO:0000266"/>
    <property type="project" value="RGD"/>
</dbReference>
<dbReference type="GO" id="GO:0005739">
    <property type="term" value="C:mitochondrion"/>
    <property type="evidence" value="ECO:0007669"/>
    <property type="project" value="GOC"/>
</dbReference>
<dbReference type="GO" id="GO:0043209">
    <property type="term" value="C:myelin sheath"/>
    <property type="evidence" value="ECO:0000314"/>
    <property type="project" value="CAFA"/>
</dbReference>
<dbReference type="GO" id="GO:0099524">
    <property type="term" value="C:postsynaptic cytosol"/>
    <property type="evidence" value="ECO:0000314"/>
    <property type="project" value="SynGO"/>
</dbReference>
<dbReference type="GO" id="GO:0099523">
    <property type="term" value="C:presynaptic cytosol"/>
    <property type="evidence" value="ECO:0000266"/>
    <property type="project" value="RGD"/>
</dbReference>
<dbReference type="GO" id="GO:0032991">
    <property type="term" value="C:protein-containing complex"/>
    <property type="evidence" value="ECO:0000266"/>
    <property type="project" value="RGD"/>
</dbReference>
<dbReference type="GO" id="GO:0030017">
    <property type="term" value="C:sarcomere"/>
    <property type="evidence" value="ECO:0000266"/>
    <property type="project" value="RGD"/>
</dbReference>
<dbReference type="GO" id="GO:0098685">
    <property type="term" value="C:Schaffer collateral - CA1 synapse"/>
    <property type="evidence" value="ECO:0000314"/>
    <property type="project" value="SynGO"/>
</dbReference>
<dbReference type="GO" id="GO:0097225">
    <property type="term" value="C:sperm midpiece"/>
    <property type="evidence" value="ECO:0007669"/>
    <property type="project" value="Ensembl"/>
</dbReference>
<dbReference type="GO" id="GO:0005876">
    <property type="term" value="C:spindle microtubule"/>
    <property type="evidence" value="ECO:0000266"/>
    <property type="project" value="RGD"/>
</dbReference>
<dbReference type="GO" id="GO:0000922">
    <property type="term" value="C:spindle pole"/>
    <property type="evidence" value="ECO:0000266"/>
    <property type="project" value="RGD"/>
</dbReference>
<dbReference type="GO" id="GO:0031982">
    <property type="term" value="C:vesicle"/>
    <property type="evidence" value="ECO:0000266"/>
    <property type="project" value="RGD"/>
</dbReference>
<dbReference type="GO" id="GO:0008076">
    <property type="term" value="C:voltage-gated potassium channel complex"/>
    <property type="evidence" value="ECO:0000266"/>
    <property type="project" value="RGD"/>
</dbReference>
<dbReference type="GO" id="GO:0010856">
    <property type="term" value="F:adenylate cyclase activator activity"/>
    <property type="evidence" value="ECO:0000266"/>
    <property type="project" value="RGD"/>
</dbReference>
<dbReference type="GO" id="GO:0008179">
    <property type="term" value="F:adenylate cyclase binding"/>
    <property type="evidence" value="ECO:0000266"/>
    <property type="project" value="RGD"/>
</dbReference>
<dbReference type="GO" id="GO:0019855">
    <property type="term" value="F:calcium channel inhibitor activity"/>
    <property type="evidence" value="ECO:0000250"/>
    <property type="project" value="UniProtKB"/>
</dbReference>
<dbReference type="GO" id="GO:0005509">
    <property type="term" value="F:calcium ion binding"/>
    <property type="evidence" value="ECO:0000314"/>
    <property type="project" value="RGD"/>
</dbReference>
<dbReference type="GO" id="GO:0048306">
    <property type="term" value="F:calcium-dependent protein binding"/>
    <property type="evidence" value="ECO:0000266"/>
    <property type="project" value="RGD"/>
</dbReference>
<dbReference type="GO" id="GO:0050998">
    <property type="term" value="F:nitric-oxide synthase binding"/>
    <property type="evidence" value="ECO:0000314"/>
    <property type="project" value="RGD"/>
</dbReference>
<dbReference type="GO" id="GO:0030235">
    <property type="term" value="F:nitric-oxide synthase regulator activity"/>
    <property type="evidence" value="ECO:0000314"/>
    <property type="project" value="RGD"/>
</dbReference>
<dbReference type="GO" id="GO:0019901">
    <property type="term" value="F:protein kinase binding"/>
    <property type="evidence" value="ECO:0000266"/>
    <property type="project" value="RGD"/>
</dbReference>
<dbReference type="GO" id="GO:0072542">
    <property type="term" value="F:protein phosphatase activator activity"/>
    <property type="evidence" value="ECO:0000266"/>
    <property type="project" value="RGD"/>
</dbReference>
<dbReference type="GO" id="GO:0043539">
    <property type="term" value="F:protein serine/threonine kinase activator activity"/>
    <property type="evidence" value="ECO:0000266"/>
    <property type="project" value="RGD"/>
</dbReference>
<dbReference type="GO" id="GO:0031432">
    <property type="term" value="F:titin binding"/>
    <property type="evidence" value="ECO:0000266"/>
    <property type="project" value="RGD"/>
</dbReference>
<dbReference type="GO" id="GO:0044325">
    <property type="term" value="F:transmembrane transporter binding"/>
    <property type="evidence" value="ECO:0000314"/>
    <property type="project" value="RGD"/>
</dbReference>
<dbReference type="GO" id="GO:0016240">
    <property type="term" value="P:autophagosome membrane docking"/>
    <property type="evidence" value="ECO:0000266"/>
    <property type="project" value="RGD"/>
</dbReference>
<dbReference type="GO" id="GO:0097720">
    <property type="term" value="P:calcineurin-mediated signaling"/>
    <property type="evidence" value="ECO:0000266"/>
    <property type="project" value="RGD"/>
</dbReference>
<dbReference type="GO" id="GO:0035458">
    <property type="term" value="P:cellular response to interferon-beta"/>
    <property type="evidence" value="ECO:0000266"/>
    <property type="project" value="RGD"/>
</dbReference>
<dbReference type="GO" id="GO:0071346">
    <property type="term" value="P:cellular response to type II interferon"/>
    <property type="evidence" value="ECO:0000266"/>
    <property type="project" value="RGD"/>
</dbReference>
<dbReference type="GO" id="GO:0005513">
    <property type="term" value="P:detection of calcium ion"/>
    <property type="evidence" value="ECO:0000266"/>
    <property type="project" value="RGD"/>
</dbReference>
<dbReference type="GO" id="GO:0090150">
    <property type="term" value="P:establishment of protein localization to membrane"/>
    <property type="evidence" value="ECO:0000315"/>
    <property type="project" value="CAFA"/>
</dbReference>
<dbReference type="GO" id="GO:0090151">
    <property type="term" value="P:establishment of protein localization to mitochondrial membrane"/>
    <property type="evidence" value="ECO:0000315"/>
    <property type="project" value="CAFA"/>
</dbReference>
<dbReference type="GO" id="GO:0000086">
    <property type="term" value="P:G2/M transition of mitotic cell cycle"/>
    <property type="evidence" value="ECO:0000266"/>
    <property type="project" value="RGD"/>
</dbReference>
<dbReference type="GO" id="GO:1990456">
    <property type="term" value="P:mitochondrion-endoplasmic reticulum membrane tethering"/>
    <property type="evidence" value="ECO:0000266"/>
    <property type="project" value="RGD"/>
</dbReference>
<dbReference type="GO" id="GO:1905913">
    <property type="term" value="P:negative regulation of calcium ion export across plasma membrane"/>
    <property type="evidence" value="ECO:0000266"/>
    <property type="project" value="RGD"/>
</dbReference>
<dbReference type="GO" id="GO:0060315">
    <property type="term" value="P:negative regulation of ryanodine-sensitive calcium-release channel activity"/>
    <property type="evidence" value="ECO:0000250"/>
    <property type="project" value="UniProtKB"/>
</dbReference>
<dbReference type="GO" id="GO:0140056">
    <property type="term" value="P:organelle localization by membrane tethering"/>
    <property type="evidence" value="ECO:0000266"/>
    <property type="project" value="RGD"/>
</dbReference>
<dbReference type="GO" id="GO:0046427">
    <property type="term" value="P:positive regulation of receptor signaling pathway via JAK-STAT"/>
    <property type="evidence" value="ECO:0000266"/>
    <property type="project" value="RGD"/>
</dbReference>
<dbReference type="GO" id="GO:0140238">
    <property type="term" value="P:presynaptic endocytosis"/>
    <property type="evidence" value="ECO:0000266"/>
    <property type="project" value="RGD"/>
</dbReference>
<dbReference type="GO" id="GO:0050848">
    <property type="term" value="P:regulation of calcium-mediated signaling"/>
    <property type="evidence" value="ECO:0000266"/>
    <property type="project" value="RGD"/>
</dbReference>
<dbReference type="GO" id="GO:0098901">
    <property type="term" value="P:regulation of cardiac muscle cell action potential"/>
    <property type="evidence" value="ECO:0000266"/>
    <property type="project" value="RGD"/>
</dbReference>
<dbReference type="GO" id="GO:0055117">
    <property type="term" value="P:regulation of cardiac muscle contraction"/>
    <property type="evidence" value="ECO:0000266"/>
    <property type="project" value="RGD"/>
</dbReference>
<dbReference type="GO" id="GO:0032465">
    <property type="term" value="P:regulation of cytokinesis"/>
    <property type="evidence" value="ECO:0000266"/>
    <property type="project" value="RGD"/>
</dbReference>
<dbReference type="GO" id="GO:0002027">
    <property type="term" value="P:regulation of heart rate"/>
    <property type="evidence" value="ECO:0000266"/>
    <property type="project" value="RGD"/>
</dbReference>
<dbReference type="GO" id="GO:0010880">
    <property type="term" value="P:regulation of release of sequestered calcium ion into cytosol by sarcoplasmic reticulum"/>
    <property type="evidence" value="ECO:0000266"/>
    <property type="project" value="RGD"/>
</dbReference>
<dbReference type="GO" id="GO:1900242">
    <property type="term" value="P:regulation of synaptic vesicle endocytosis"/>
    <property type="evidence" value="ECO:0000315"/>
    <property type="project" value="CAFA"/>
</dbReference>
<dbReference type="GO" id="GO:2000300">
    <property type="term" value="P:regulation of synaptic vesicle exocytosis"/>
    <property type="evidence" value="ECO:0000315"/>
    <property type="project" value="CAFA"/>
</dbReference>
<dbReference type="GO" id="GO:0001975">
    <property type="term" value="P:response to amphetamine"/>
    <property type="evidence" value="ECO:0000270"/>
    <property type="project" value="RGD"/>
</dbReference>
<dbReference type="GO" id="GO:0051592">
    <property type="term" value="P:response to calcium ion"/>
    <property type="evidence" value="ECO:0000266"/>
    <property type="project" value="RGD"/>
</dbReference>
<dbReference type="GO" id="GO:0051412">
    <property type="term" value="P:response to corticosterone"/>
    <property type="evidence" value="ECO:0000270"/>
    <property type="project" value="RGD"/>
</dbReference>
<dbReference type="CDD" id="cd00051">
    <property type="entry name" value="EFh"/>
    <property type="match status" value="2"/>
</dbReference>
<dbReference type="FunFam" id="1.10.238.10:FF:000527">
    <property type="entry name" value="Calmodulin-3"/>
    <property type="match status" value="1"/>
</dbReference>
<dbReference type="Gene3D" id="1.10.238.10">
    <property type="entry name" value="EF-hand"/>
    <property type="match status" value="3"/>
</dbReference>
<dbReference type="InterPro" id="IPR050230">
    <property type="entry name" value="CALM/Myosin/TropC-like"/>
</dbReference>
<dbReference type="InterPro" id="IPR011992">
    <property type="entry name" value="EF-hand-dom_pair"/>
</dbReference>
<dbReference type="InterPro" id="IPR018247">
    <property type="entry name" value="EF_Hand_1_Ca_BS"/>
</dbReference>
<dbReference type="InterPro" id="IPR002048">
    <property type="entry name" value="EF_hand_dom"/>
</dbReference>
<dbReference type="PANTHER" id="PTHR23048:SF0">
    <property type="entry name" value="CALMODULIN LIKE 3"/>
    <property type="match status" value="1"/>
</dbReference>
<dbReference type="PANTHER" id="PTHR23048">
    <property type="entry name" value="MYOSIN LIGHT CHAIN 1, 3"/>
    <property type="match status" value="1"/>
</dbReference>
<dbReference type="Pfam" id="PF13499">
    <property type="entry name" value="EF-hand_7"/>
    <property type="match status" value="2"/>
</dbReference>
<dbReference type="PRINTS" id="PR00450">
    <property type="entry name" value="RECOVERIN"/>
</dbReference>
<dbReference type="SMART" id="SM00054">
    <property type="entry name" value="EFh"/>
    <property type="match status" value="4"/>
</dbReference>
<dbReference type="SUPFAM" id="SSF47473">
    <property type="entry name" value="EF-hand"/>
    <property type="match status" value="1"/>
</dbReference>
<dbReference type="PROSITE" id="PS00018">
    <property type="entry name" value="EF_HAND_1"/>
    <property type="match status" value="4"/>
</dbReference>
<dbReference type="PROSITE" id="PS50222">
    <property type="entry name" value="EF_HAND_2"/>
    <property type="match status" value="4"/>
</dbReference>
<gene>
    <name evidence="15" type="primary">Calm2</name>
    <name type="synonym">Cam2</name>
    <name type="synonym">Camb</name>
    <name evidence="13" type="synonym">CaMII</name>
</gene>
<proteinExistence type="evidence at protein level"/>
<feature type="initiator methionine" description="Removed" evidence="10 12">
    <location>
        <position position="1"/>
    </location>
</feature>
<feature type="chain" id="PRO_0000439939" description="Calmodulin-2">
    <location>
        <begin position="2"/>
        <end position="149"/>
    </location>
</feature>
<feature type="domain" description="EF-hand 1" evidence="7">
    <location>
        <begin position="8"/>
        <end position="43"/>
    </location>
</feature>
<feature type="domain" description="EF-hand 2" evidence="7">
    <location>
        <begin position="44"/>
        <end position="79"/>
    </location>
</feature>
<feature type="domain" description="EF-hand 3" evidence="7">
    <location>
        <begin position="81"/>
        <end position="116"/>
    </location>
</feature>
<feature type="domain" description="EF-hand 4" evidence="7">
    <location>
        <begin position="117"/>
        <end position="149"/>
    </location>
</feature>
<feature type="region of interest" description="Necessary and sufficient for interaction with PCP4" evidence="2">
    <location>
        <begin position="77"/>
        <end position="149"/>
    </location>
</feature>
<feature type="binding site" evidence="7">
    <location>
        <position position="21"/>
    </location>
    <ligand>
        <name>Ca(2+)</name>
        <dbReference type="ChEBI" id="CHEBI:29108"/>
        <label>1</label>
    </ligand>
</feature>
<feature type="binding site" evidence="7">
    <location>
        <position position="23"/>
    </location>
    <ligand>
        <name>Ca(2+)</name>
        <dbReference type="ChEBI" id="CHEBI:29108"/>
        <label>1</label>
    </ligand>
</feature>
<feature type="binding site" evidence="7">
    <location>
        <position position="25"/>
    </location>
    <ligand>
        <name>Ca(2+)</name>
        <dbReference type="ChEBI" id="CHEBI:29108"/>
        <label>1</label>
    </ligand>
</feature>
<feature type="binding site" evidence="7">
    <location>
        <position position="27"/>
    </location>
    <ligand>
        <name>Ca(2+)</name>
        <dbReference type="ChEBI" id="CHEBI:29108"/>
        <label>1</label>
    </ligand>
</feature>
<feature type="binding site" evidence="7">
    <location>
        <position position="32"/>
    </location>
    <ligand>
        <name>Ca(2+)</name>
        <dbReference type="ChEBI" id="CHEBI:29108"/>
        <label>1</label>
    </ligand>
</feature>
<feature type="binding site" evidence="7">
    <location>
        <position position="57"/>
    </location>
    <ligand>
        <name>Ca(2+)</name>
        <dbReference type="ChEBI" id="CHEBI:29108"/>
        <label>2</label>
    </ligand>
</feature>
<feature type="binding site" evidence="7">
    <location>
        <position position="59"/>
    </location>
    <ligand>
        <name>Ca(2+)</name>
        <dbReference type="ChEBI" id="CHEBI:29108"/>
        <label>2</label>
    </ligand>
</feature>
<feature type="binding site" evidence="7">
    <location>
        <position position="61"/>
    </location>
    <ligand>
        <name>Ca(2+)</name>
        <dbReference type="ChEBI" id="CHEBI:29108"/>
        <label>2</label>
    </ligand>
</feature>
<feature type="binding site" evidence="7">
    <location>
        <position position="63"/>
    </location>
    <ligand>
        <name>Ca(2+)</name>
        <dbReference type="ChEBI" id="CHEBI:29108"/>
        <label>2</label>
    </ligand>
</feature>
<feature type="binding site" evidence="7">
    <location>
        <position position="68"/>
    </location>
    <ligand>
        <name>Ca(2+)</name>
        <dbReference type="ChEBI" id="CHEBI:29108"/>
        <label>2</label>
    </ligand>
</feature>
<feature type="binding site" evidence="7">
    <location>
        <position position="94"/>
    </location>
    <ligand>
        <name>Ca(2+)</name>
        <dbReference type="ChEBI" id="CHEBI:29108"/>
        <label>3</label>
    </ligand>
</feature>
<feature type="binding site" evidence="7">
    <location>
        <position position="96"/>
    </location>
    <ligand>
        <name>Ca(2+)</name>
        <dbReference type="ChEBI" id="CHEBI:29108"/>
        <label>3</label>
    </ligand>
</feature>
<feature type="binding site" evidence="7">
    <location>
        <position position="98"/>
    </location>
    <ligand>
        <name>Ca(2+)</name>
        <dbReference type="ChEBI" id="CHEBI:29108"/>
        <label>3</label>
    </ligand>
</feature>
<feature type="binding site" evidence="7">
    <location>
        <position position="100"/>
    </location>
    <ligand>
        <name>Ca(2+)</name>
        <dbReference type="ChEBI" id="CHEBI:29108"/>
        <label>3</label>
    </ligand>
</feature>
<feature type="binding site" evidence="7">
    <location>
        <position position="105"/>
    </location>
    <ligand>
        <name>Ca(2+)</name>
        <dbReference type="ChEBI" id="CHEBI:29108"/>
        <label>3</label>
    </ligand>
</feature>
<feature type="binding site" evidence="7">
    <location>
        <position position="130"/>
    </location>
    <ligand>
        <name>Ca(2+)</name>
        <dbReference type="ChEBI" id="CHEBI:29108"/>
        <label>4</label>
    </ligand>
</feature>
<feature type="binding site" evidence="7">
    <location>
        <position position="132"/>
    </location>
    <ligand>
        <name>Ca(2+)</name>
        <dbReference type="ChEBI" id="CHEBI:29108"/>
        <label>4</label>
    </ligand>
</feature>
<feature type="binding site" evidence="7">
    <location>
        <position position="134"/>
    </location>
    <ligand>
        <name>Ca(2+)</name>
        <dbReference type="ChEBI" id="CHEBI:29108"/>
        <label>4</label>
    </ligand>
</feature>
<feature type="binding site" evidence="7">
    <location>
        <position position="136"/>
    </location>
    <ligand>
        <name>Ca(2+)</name>
        <dbReference type="ChEBI" id="CHEBI:29108"/>
        <label>4</label>
    </ligand>
</feature>
<feature type="binding site" evidence="7">
    <location>
        <position position="141"/>
    </location>
    <ligand>
        <name>Ca(2+)</name>
        <dbReference type="ChEBI" id="CHEBI:29108"/>
        <label>4</label>
    </ligand>
</feature>
<feature type="modified residue" description="N-acetylalanine" evidence="10 12">
    <location>
        <position position="2"/>
    </location>
</feature>
<feature type="modified residue" description="N6-acetyllysine; alternate" evidence="2">
    <location>
        <position position="22"/>
    </location>
</feature>
<feature type="modified residue" description="Phosphothreonine; by CaMK4" evidence="8">
    <location>
        <position position="45"/>
    </location>
</feature>
<feature type="modified residue" description="Phosphoserine" evidence="2">
    <location>
        <position position="82"/>
    </location>
</feature>
<feature type="modified residue" description="N6-acetyllysine" evidence="2">
    <location>
        <position position="95"/>
    </location>
</feature>
<feature type="modified residue" description="Phosphotyrosine" evidence="16">
    <location>
        <position position="100"/>
    </location>
</feature>
<feature type="modified residue" description="Phosphoserine" evidence="16">
    <location>
        <position position="102"/>
    </location>
</feature>
<feature type="modified residue" description="Phosphothreonine" evidence="2">
    <location>
        <position position="111"/>
    </location>
</feature>
<feature type="modified residue" description="N6,N6,N6-trimethyllysine; alternate" evidence="10">
    <location>
        <position position="116"/>
    </location>
</feature>
<feature type="modified residue" description="N6-methyllysine; alternate" evidence="2">
    <location>
        <position position="116"/>
    </location>
</feature>
<feature type="modified residue" description="Phosphotyrosine" evidence="2">
    <location>
        <position position="139"/>
    </location>
</feature>
<feature type="cross-link" description="Glycyl lysine isopeptide (Lys-Gly) (interchain with G-Cter in SUMO2); alternate" evidence="2">
    <location>
        <position position="22"/>
    </location>
</feature>
<feature type="cross-link" description="Glycyl lysine isopeptide (Lys-Gly) (interchain with G-Cter in ubiquitin); alternate" evidence="4">
    <location>
        <position position="22"/>
    </location>
</feature>
<feature type="helix" evidence="17">
    <location>
        <begin position="7"/>
        <end position="20"/>
    </location>
</feature>
<feature type="strand" evidence="17">
    <location>
        <begin position="25"/>
        <end position="28"/>
    </location>
</feature>
<feature type="helix" evidence="17">
    <location>
        <begin position="30"/>
        <end position="39"/>
    </location>
</feature>
<feature type="helix" evidence="17">
    <location>
        <begin position="46"/>
        <end position="56"/>
    </location>
</feature>
<feature type="strand" evidence="17">
    <location>
        <begin position="58"/>
        <end position="65"/>
    </location>
</feature>
<feature type="helix" evidence="17">
    <location>
        <begin position="66"/>
        <end position="74"/>
    </location>
</feature>
<feature type="helix" evidence="17">
    <location>
        <begin position="83"/>
        <end position="91"/>
    </location>
</feature>
<feature type="strand" evidence="17">
    <location>
        <begin position="97"/>
        <end position="102"/>
    </location>
</feature>
<feature type="helix" evidence="17">
    <location>
        <begin position="103"/>
        <end position="110"/>
    </location>
</feature>
<feature type="helix" evidence="17">
    <location>
        <begin position="119"/>
        <end position="129"/>
    </location>
</feature>
<feature type="strand" evidence="17">
    <location>
        <begin position="133"/>
        <end position="138"/>
    </location>
</feature>
<feature type="helix" evidence="17">
    <location>
        <begin position="139"/>
        <end position="147"/>
    </location>
</feature>
<evidence type="ECO:0000250" key="1"/>
<evidence type="ECO:0000250" key="2">
    <source>
        <dbReference type="UniProtKB" id="P0DP24"/>
    </source>
</evidence>
<evidence type="ECO:0000250" key="3">
    <source>
        <dbReference type="UniProtKB" id="P0DP29"/>
    </source>
</evidence>
<evidence type="ECO:0000250" key="4">
    <source>
        <dbReference type="UniProtKB" id="P62157"/>
    </source>
</evidence>
<evidence type="ECO:0000250" key="5">
    <source>
        <dbReference type="UniProtKB" id="P62158"/>
    </source>
</evidence>
<evidence type="ECO:0000250" key="6">
    <source>
        <dbReference type="UniProtKB" id="P62204"/>
    </source>
</evidence>
<evidence type="ECO:0000255" key="7">
    <source>
        <dbReference type="PROSITE-ProRule" id="PRU00448"/>
    </source>
</evidence>
<evidence type="ECO:0000269" key="8">
    <source>
    </source>
</evidence>
<evidence type="ECO:0000269" key="9">
    <source>
    </source>
</evidence>
<evidence type="ECO:0000269" key="10">
    <source>
    </source>
</evidence>
<evidence type="ECO:0000269" key="11">
    <source>
    </source>
</evidence>
<evidence type="ECO:0000269" key="12">
    <source ref="10"/>
</evidence>
<evidence type="ECO:0000303" key="13">
    <source>
    </source>
</evidence>
<evidence type="ECO:0000305" key="14"/>
<evidence type="ECO:0000312" key="15">
    <source>
        <dbReference type="RGD" id="2258"/>
    </source>
</evidence>
<evidence type="ECO:0007744" key="16">
    <source>
    </source>
</evidence>
<evidence type="ECO:0007829" key="17">
    <source>
        <dbReference type="PDB" id="6ALE"/>
    </source>
</evidence>
<protein>
    <recommendedName>
        <fullName evidence="2">Calmodulin-2</fullName>
    </recommendedName>
</protein>
<keyword id="KW-0002">3D-structure</keyword>
<keyword id="KW-0007">Acetylation</keyword>
<keyword id="KW-0106">Calcium</keyword>
<keyword id="KW-0963">Cytoplasm</keyword>
<keyword id="KW-0206">Cytoskeleton</keyword>
<keyword id="KW-0903">Direct protein sequencing</keyword>
<keyword id="KW-1017">Isopeptide bond</keyword>
<keyword id="KW-0479">Metal-binding</keyword>
<keyword id="KW-0488">Methylation</keyword>
<keyword id="KW-0597">Phosphoprotein</keyword>
<keyword id="KW-1185">Reference proteome</keyword>
<keyword id="KW-0677">Repeat</keyword>
<keyword id="KW-0832">Ubl conjugation</keyword>
<organism>
    <name type="scientific">Rattus norvegicus</name>
    <name type="common">Rat</name>
    <dbReference type="NCBI Taxonomy" id="10116"/>
    <lineage>
        <taxon>Eukaryota</taxon>
        <taxon>Metazoa</taxon>
        <taxon>Chordata</taxon>
        <taxon>Craniata</taxon>
        <taxon>Vertebrata</taxon>
        <taxon>Euteleostomi</taxon>
        <taxon>Mammalia</taxon>
        <taxon>Eutheria</taxon>
        <taxon>Euarchontoglires</taxon>
        <taxon>Glires</taxon>
        <taxon>Rodentia</taxon>
        <taxon>Myomorpha</taxon>
        <taxon>Muroidea</taxon>
        <taxon>Muridae</taxon>
        <taxon>Murinae</taxon>
        <taxon>Rattus</taxon>
    </lineage>
</organism>
<accession>P0DP30</accession>
<accession>P02593</accession>
<accession>P62161</accession>
<accession>P70667</accession>
<accession>P99014</accession>
<accession>Q61379</accession>
<accession>Q61380</accession>
<reference key="1">
    <citation type="journal article" date="1987" name="J. Biol. Chem.">
        <title>Molecular analysis of human and rat calmodulin complementary DNA clones. Evidence for additional active genes in these species.</title>
        <authorList>
            <person name="Sengupta B."/>
            <person name="Friedberg F."/>
            <person name="Detera-Wadleigh S.D."/>
        </authorList>
    </citation>
    <scope>NUCLEOTIDE SEQUENCE [MRNA]</scope>
</reference>
<reference key="2">
    <citation type="journal article" date="1987" name="Mol. Cell. Biol.">
        <title>Multiple calmodulin mRNA species are derived from two distinct genes.</title>
        <authorList>
            <person name="Nojima H."/>
            <person name="Kishi K."/>
            <person name="Sokabe H."/>
        </authorList>
    </citation>
    <scope>NUCLEOTIDE SEQUENCE [MRNA]</scope>
</reference>
<reference key="3">
    <citation type="journal article" date="1989" name="J. Mol. Biol.">
        <title>Structural organization of multiple rat calmodulin genes.</title>
        <authorList>
            <person name="Nojima H."/>
        </authorList>
    </citation>
    <scope>NUCLEOTIDE SEQUENCE [GENOMIC DNA]</scope>
    <source>
        <strain>SHR</strain>
    </source>
</reference>
<reference key="4">
    <citation type="journal article" date="2004" name="Genome Res.">
        <title>The status, quality, and expansion of the NIH full-length cDNA project: the Mammalian Gene Collection (MGC).</title>
        <authorList>
            <consortium name="The MGC Project Team"/>
        </authorList>
    </citation>
    <scope>NUCLEOTIDE SEQUENCE [LARGE SCALE MRNA]</scope>
    <source>
        <tissue>Pituitary</tissue>
    </source>
</reference>
<reference key="5">
    <citation type="journal article" date="1978" name="J. Biol. Chem.">
        <title>Sequence homology of the Ca2+-dependent regulator of cyclic nucleotide phosphodiesterase from rat testis with other Ca2+-binding proteins.</title>
        <authorList>
            <person name="Dedman J.R."/>
            <person name="Jackson R.L."/>
            <person name="Schreiber W.E."/>
            <person name="Means A.R."/>
        </authorList>
    </citation>
    <scope>PROTEIN SEQUENCE OF 2-149</scope>
    <scope>ACETYLATION AT ALA-2</scope>
    <scope>METHYLATION AT LYS-116</scope>
    <source>
        <tissue>Testis</tissue>
    </source>
</reference>
<reference key="6">
    <citation type="submission" date="2007-09" db="UniProtKB">
        <authorList>
            <person name="Lubec G."/>
            <person name="Chen W.-Q."/>
            <person name="Kang S.U."/>
            <person name="Lubec S."/>
        </authorList>
    </citation>
    <scope>PROTEIN SEQUENCE OF 15-31; 79-87 AND 92-107</scope>
    <scope>IDENTIFICATION BY MASS SPECTROMETRY</scope>
    <source>
        <strain>Sprague-Dawley</strain>
        <tissue>Brain</tissue>
        <tissue>Hippocampus</tissue>
    </source>
</reference>
<reference key="7">
    <citation type="journal article" date="1996" name="J. Biol. Chem.">
        <title>Calmodulin binds to specific sequences in the cytoplasmic domain of C-CAM and down-regulates C-CAM self-association.</title>
        <authorList>
            <person name="Edlund M."/>
            <person name="Blikstad I."/>
            <person name="Obrink B."/>
        </authorList>
    </citation>
    <scope>INTERACTION WITH CEACAM1</scope>
</reference>
<reference key="8">
    <citation type="journal article" date="2002" name="Arch. Biochem. Biophys.">
        <title>Phosphorylation of calmodulin by Ca2+/calmodulin-dependent protein kinase IV.</title>
        <authorList>
            <person name="Ishida A."/>
            <person name="Kameshita I."/>
            <person name="Okuno S."/>
            <person name="Kitani T."/>
            <person name="Fujisawa H."/>
        </authorList>
    </citation>
    <scope>PHOSPHORYLATION AT THR-45</scope>
</reference>
<reference key="9">
    <citation type="journal article" date="2007" name="Circulation">
        <title>Rad GTPase deficiency leads to cardiac hypertrophy.</title>
        <authorList>
            <person name="Chang L."/>
            <person name="Zhang J."/>
            <person name="Tseng Y.-H."/>
            <person name="Xie C.-Q."/>
            <person name="Ilany J."/>
            <person name="Bruning J.C."/>
            <person name="Sun Z."/>
            <person name="Zhu X."/>
            <person name="Cui T."/>
            <person name="Youker K.A."/>
            <person name="Yang Q."/>
            <person name="Day S.M."/>
            <person name="Kahn C.R."/>
            <person name="Chen Y.E."/>
        </authorList>
    </citation>
    <scope>INTERACTION WITH RRAD</scope>
</reference>
<reference key="10">
    <citation type="submission" date="2007-02" db="UniProtKB">
        <authorList>
            <person name="Lubec G."/>
            <person name="Chen W.-Q."/>
        </authorList>
    </citation>
    <scope>ACETYLATION AT ALA-2</scope>
    <scope>IDENTIFICATION BY MASS SPECTROMETRY</scope>
</reference>
<reference key="11">
    <citation type="journal article" date="2012" name="Nat. Commun.">
        <title>Quantitative maps of protein phosphorylation sites across 14 different rat organs and tissues.</title>
        <authorList>
            <person name="Lundby A."/>
            <person name="Secher A."/>
            <person name="Lage K."/>
            <person name="Nordsborg N.B."/>
            <person name="Dmytriyev A."/>
            <person name="Lundby C."/>
            <person name="Olsen J.V."/>
        </authorList>
    </citation>
    <scope>PHOSPHORYLATION [LARGE SCALE ANALYSIS] AT TYR-100 AND SER-102</scope>
    <scope>IDENTIFICATION BY MASS SPECTROMETRY [LARGE SCALE ANALYSIS]</scope>
</reference>
<comment type="function">
    <text evidence="2">Calmodulin acts as part of a calcium signal transduction pathway by mediating the control of a large number of enzymes, ion channels, aquaporins and other proteins through calcium-binding. Calcium-binding is required for the activation of calmodulin. Among the enzymes to be stimulated by the calmodulin-calcium complex are a number of protein kinases, such as myosin light-chain kinases and calmodulin-dependent protein kinase type II (CaMK2), and phosphatases. Together with CCP110 and centrin, is involved in a genetic pathway that regulates the centrosome cycle and progression through cytokinesis. Mediates calcium-dependent inactivation of CACNA1C. Positively regulates calcium-activated potassium channel activity of KCNN2.</text>
</comment>
<comment type="subunit">
    <text evidence="2 3 4 5 6 9 11">Interacts with CEP97, CCP110, TTN/titin and SRY (By similarity). Interacts with MYO5A and RRAD (PubMed:18056528). Interacts with USP6; the interaction is calcium dependent (By similarity). Interacts with CDK5RAP2 (By similarity). Interacts with SCN5A (By similarity). Interacts with RYR1 (By similarity). Interacts with FCHO1 (By similarity). Interacts with MIP in a 1:2 stoichiometry; the interaction with the cytoplasmic domains from two MIP subunits promotes MIP water channel closure (By similarity). Interacts with ORAI1; this may play a role in the regulation of ORAI1-mediated calcium transport (By similarity). Interacts with SYT7 (By similarity). Interacts with MYO10 and MYO1C (By similarity). Interacts with CEACAM1 (via cytoplasmic domain); this interaction is in a calcium dependent manner and reduces homophilic cell adhesion through dissociation of dimer (PubMed:8576129). Interacts with RYR2; regulates RYR2 calcium-release channel activity (By similarity). Interacts with PCP4; regulates calmodulin calcium-binding (By similarity). Interacts with the heterotetrameric KCNQ2 and KCNQ3 channel; the interaction is calcium-independent, constitutive and participates in the proper assembly of a functional heterotetrameric M channel (By similarity). Component of the SIFI complex (By similarity).</text>
</comment>
<comment type="subcellular location">
    <subcellularLocation>
        <location>Cytoplasm</location>
        <location>Cytoskeleton</location>
        <location>Spindle</location>
    </subcellularLocation>
    <subcellularLocation>
        <location>Cytoplasm</location>
        <location>Cytoskeleton</location>
        <location>Spindle pole</location>
    </subcellularLocation>
    <text evidence="1">Distributed throughout the cell during interphase, but during mitosis becomes dramatically localized to the spindle poles and the spindle microtubules.</text>
</comment>
<comment type="PTM">
    <text evidence="1">Ubiquitination results in a strongly decreased activity.</text>
</comment>
<comment type="PTM">
    <text evidence="8">Phosphorylation results in a decreased activity.</text>
</comment>
<comment type="miscellaneous">
    <text evidence="2">This protein has four functional calcium-binding sites.</text>
</comment>
<comment type="similarity">
    <text evidence="14">Belongs to the calmodulin family.</text>
</comment>